<organism>
    <name type="scientific">Bacillus anthracis</name>
    <dbReference type="NCBI Taxonomy" id="1392"/>
    <lineage>
        <taxon>Bacteria</taxon>
        <taxon>Bacillati</taxon>
        <taxon>Bacillota</taxon>
        <taxon>Bacilli</taxon>
        <taxon>Bacillales</taxon>
        <taxon>Bacillaceae</taxon>
        <taxon>Bacillus</taxon>
        <taxon>Bacillus cereus group</taxon>
    </lineage>
</organism>
<feature type="signal peptide" evidence="14">
    <location>
        <begin position="1"/>
        <end position="33"/>
    </location>
</feature>
<feature type="chain" id="PRO_0000001317" description="Calmodulin-sensitive adenylate cyclase">
    <location>
        <begin position="34"/>
        <end position="800"/>
    </location>
</feature>
<feature type="domain" description="ATLF-like" evidence="1">
    <location>
        <begin position="60"/>
        <end position="273"/>
    </location>
</feature>
<feature type="region of interest" description="Catalytic CA1" evidence="6">
    <location>
        <begin position="294"/>
        <end position="349"/>
    </location>
</feature>
<feature type="region of interest" description="Catalytic CB" evidence="6">
    <location>
        <begin position="350"/>
        <end position="489"/>
    </location>
</feature>
<feature type="region of interest" description="Catalytic CA2" evidence="6">
    <location>
        <begin position="490"/>
        <end position="622"/>
    </location>
</feature>
<feature type="region of interest" description="Interaction with calmodulin" evidence="13">
    <location>
        <begin position="623"/>
        <end position="800"/>
    </location>
</feature>
<feature type="active site" description="Proton acceptor" evidence="6">
    <location>
        <position position="351"/>
    </location>
</feature>
<feature type="binding site" evidence="10 22 23 24 25 26 27 28">
    <location>
        <position position="491"/>
    </location>
    <ligand>
        <name>Mg(2+)</name>
        <dbReference type="ChEBI" id="CHEBI:18420"/>
    </ligand>
</feature>
<feature type="binding site" evidence="10 22 23 24 25 26 27 28">
    <location>
        <position position="493"/>
    </location>
    <ligand>
        <name>Mg(2+)</name>
        <dbReference type="ChEBI" id="CHEBI:18420"/>
    </ligand>
</feature>
<feature type="binding site" evidence="10 24">
    <location>
        <position position="548"/>
    </location>
    <ligand>
        <name>3',5'-cyclic AMP</name>
        <dbReference type="ChEBI" id="CHEBI:58165"/>
    </ligand>
</feature>
<feature type="binding site" evidence="10 24">
    <location>
        <begin position="577"/>
        <end position="579"/>
    </location>
    <ligand>
        <name>3',5'-cyclic AMP</name>
        <dbReference type="ChEBI" id="CHEBI:58165"/>
    </ligand>
</feature>
<feature type="binding site" evidence="10 22 23 24 25 26 27 28">
    <location>
        <position position="577"/>
    </location>
    <ligand>
        <name>Mg(2+)</name>
        <dbReference type="ChEBI" id="CHEBI:18420"/>
    </ligand>
</feature>
<feature type="mutagenesis site" description="No effect." evidence="4">
    <original>V</original>
    <variation>A</variation>
    <location>
        <position position="169"/>
    </location>
</feature>
<feature type="mutagenesis site" description="Loss of cytotoxicity due to inability to bind PA." evidence="4">
    <original>Y</original>
    <variation>A</variation>
    <location>
        <position position="170"/>
    </location>
</feature>
<feature type="mutagenesis site" description="Loss of cytotoxicity due to inability to bind PA." evidence="4">
    <original>Y</original>
    <variation>A</variation>
    <location>
        <position position="171"/>
    </location>
</feature>
<feature type="mutagenesis site" description="No effect." evidence="4">
    <original>E</original>
    <variation>A</variation>
    <location>
        <position position="172"/>
    </location>
</feature>
<feature type="mutagenesis site" description="Loss of cytotoxicity due to inability to bind PA." evidence="4">
    <original>I</original>
    <variation>A</variation>
    <location>
        <position position="173"/>
    </location>
</feature>
<feature type="mutagenesis site" description="No effect." evidence="4">
    <original>G</original>
    <variation>A</variation>
    <location>
        <position position="174"/>
    </location>
</feature>
<feature type="mutagenesis site" description="Loss of cytotoxicity due to inability to bind PA." evidence="4">
    <original>K</original>
    <variation>A</variation>
    <location>
        <position position="175"/>
    </location>
</feature>
<feature type="mutagenesis site" description="Great decrease in activity." evidence="2">
    <original>R</original>
    <variation>M</variation>
    <location>
        <position position="329"/>
    </location>
</feature>
<feature type="mutagenesis site" description="Loss of activity." evidence="11 12">
    <original>K</original>
    <variation>M</variation>
    <variation>R</variation>
    <location>
        <position position="346"/>
    </location>
</feature>
<feature type="mutagenesis site" description="Loss of activity due to inability to bind the substrate." evidence="11 12">
    <original>K</original>
    <variation>Q</variation>
    <location>
        <position position="346"/>
    </location>
</feature>
<feature type="mutagenesis site" description="Loss of activity." evidence="12">
    <original>K</original>
    <variation>M</variation>
    <variation>R</variation>
    <variation>A</variation>
    <location>
        <position position="353"/>
    </location>
</feature>
<feature type="mutagenesis site" description="Decreases activity." evidence="12">
    <original>E</original>
    <variation>Q</variation>
    <location>
        <position position="436"/>
    </location>
</feature>
<feature type="mutagenesis site" description="Decreases activity." evidence="2">
    <original>E</original>
    <variation>Q</variation>
    <location>
        <position position="443"/>
    </location>
</feature>
<feature type="mutagenesis site" description="Great decrease in activity." evidence="2">
    <original>D</original>
    <variation>N</variation>
    <location>
        <position position="491"/>
    </location>
</feature>
<feature type="mutagenesis site" description="Great decrease in activity." evidence="2">
    <original>D</original>
    <variation>N</variation>
    <location>
        <position position="493"/>
    </location>
</feature>
<feature type="mutagenesis site" description="Little effect on activation by calmodulin." evidence="6">
    <original>L</original>
    <variation>A</variation>
    <location>
        <position position="523"/>
    </location>
</feature>
<feature type="mutagenesis site" description="Great decrease in calmodulin binding." evidence="6">
    <original>K</original>
    <variation>A</variation>
    <location>
        <position position="525"/>
    </location>
</feature>
<feature type="mutagenesis site" description="Little effect on activation by calmodulin." evidence="6">
    <original>Q</original>
    <variation>A</variation>
    <location>
        <position position="526"/>
    </location>
</feature>
<feature type="mutagenesis site" description="Little effect on activation by calmodulin." evidence="6">
    <original>V</original>
    <variation>A</variation>
    <location>
        <position position="529"/>
    </location>
</feature>
<feature type="mutagenesis site" description="Loss of function." evidence="6">
    <original>H</original>
    <variation>N</variation>
    <variation>D</variation>
    <location>
        <position position="577"/>
    </location>
</feature>
<feature type="mutagenesis site" description="Decreases activity." evidence="6">
    <original>N</original>
    <variation>A</variation>
    <location>
        <position position="583"/>
    </location>
</feature>
<feature type="mutagenesis site" description="Loss of function." evidence="6">
    <original>N</original>
    <variation>Q</variation>
    <variation>H</variation>
    <location>
        <position position="583"/>
    </location>
</feature>
<feature type="mutagenesis site" description="Loss of function." evidence="6">
    <original>E</original>
    <variation>A</variation>
    <location>
        <position position="588"/>
    </location>
</feature>
<feature type="mutagenesis site" description="Decreases activity." evidence="6">
    <original>D</original>
    <variation>A</variation>
    <location>
        <position position="590"/>
    </location>
</feature>
<feature type="mutagenesis site" description="Decreases catalysis rate." evidence="6">
    <original>N</original>
    <variation>A</variation>
    <location>
        <position position="639"/>
    </location>
</feature>
<feature type="mutagenesis site" description="Decreases activity due to reduced activation by calmodulin." evidence="6">
    <original>D</original>
    <variation>A</variation>
    <location>
        <position position="647"/>
    </location>
</feature>
<feature type="sequence conflict" description="In Ref. 2; AAA79215." evidence="21" ref="2">
    <original>V</original>
    <variation>E</variation>
    <location>
        <position position="350"/>
    </location>
</feature>
<feature type="sequence conflict" description="In Ref. 2; AA sequence." evidence="21" ref="2">
    <original>Q</original>
    <variation>T</variation>
    <location>
        <position position="510"/>
    </location>
</feature>
<feature type="sequence conflict" description="In Ref. 2; AA sequence." evidence="21" ref="2">
    <original>EW</original>
    <variation>RM</variation>
    <location>
        <begin position="512"/>
        <end position="513"/>
    </location>
</feature>
<feature type="sequence conflict" description="In Ref. 3; CAA00652." evidence="21" ref="3">
    <original>V</original>
    <variation>L</variation>
    <location>
        <position position="760"/>
    </location>
</feature>
<feature type="helix" evidence="42">
    <location>
        <begin position="54"/>
        <end position="62"/>
    </location>
</feature>
<feature type="turn" evidence="42">
    <location>
        <begin position="63"/>
        <end position="66"/>
    </location>
</feature>
<feature type="strand" evidence="40">
    <location>
        <begin position="67"/>
        <end position="69"/>
    </location>
</feature>
<feature type="helix" evidence="40">
    <location>
        <begin position="76"/>
        <end position="86"/>
    </location>
</feature>
<feature type="helix" evidence="40">
    <location>
        <begin position="91"/>
        <end position="99"/>
    </location>
</feature>
<feature type="strand" evidence="40">
    <location>
        <begin position="103"/>
        <end position="109"/>
    </location>
</feature>
<feature type="turn" evidence="41">
    <location>
        <begin position="111"/>
        <end position="114"/>
    </location>
</feature>
<feature type="helix" evidence="42">
    <location>
        <begin position="115"/>
        <end position="117"/>
    </location>
</feature>
<feature type="strand" evidence="40">
    <location>
        <begin position="119"/>
        <end position="122"/>
    </location>
</feature>
<feature type="turn" evidence="44">
    <location>
        <begin position="123"/>
        <end position="125"/>
    </location>
</feature>
<feature type="strand" evidence="40">
    <location>
        <begin position="130"/>
        <end position="132"/>
    </location>
</feature>
<feature type="helix" evidence="40">
    <location>
        <begin position="137"/>
        <end position="139"/>
    </location>
</feature>
<feature type="strand" evidence="40">
    <location>
        <begin position="141"/>
        <end position="144"/>
    </location>
</feature>
<feature type="strand" evidence="40">
    <location>
        <begin position="147"/>
        <end position="149"/>
    </location>
</feature>
<feature type="strand" evidence="40">
    <location>
        <begin position="151"/>
        <end position="155"/>
    </location>
</feature>
<feature type="turn" evidence="45">
    <location>
        <begin position="159"/>
        <end position="161"/>
    </location>
</feature>
<feature type="turn" evidence="40">
    <location>
        <begin position="163"/>
        <end position="168"/>
    </location>
</feature>
<feature type="helix" evidence="40">
    <location>
        <begin position="169"/>
        <end position="176"/>
    </location>
</feature>
<feature type="turn" evidence="40">
    <location>
        <begin position="177"/>
        <end position="182"/>
    </location>
</feature>
<feature type="strand" evidence="40">
    <location>
        <begin position="183"/>
        <end position="188"/>
    </location>
</feature>
<feature type="helix" evidence="40">
    <location>
        <begin position="192"/>
        <end position="197"/>
    </location>
</feature>
<feature type="turn" evidence="40">
    <location>
        <begin position="198"/>
        <end position="202"/>
    </location>
</feature>
<feature type="strand" evidence="40">
    <location>
        <begin position="203"/>
        <end position="206"/>
    </location>
</feature>
<feature type="strand" evidence="45">
    <location>
        <begin position="208"/>
        <end position="210"/>
    </location>
</feature>
<feature type="turn" evidence="40">
    <location>
        <begin position="211"/>
        <end position="213"/>
    </location>
</feature>
<feature type="strand" evidence="40">
    <location>
        <begin position="215"/>
        <end position="217"/>
    </location>
</feature>
<feature type="strand" evidence="43">
    <location>
        <begin position="221"/>
        <end position="223"/>
    </location>
</feature>
<feature type="strand" evidence="40">
    <location>
        <begin position="226"/>
        <end position="229"/>
    </location>
</feature>
<feature type="turn" evidence="40">
    <location>
        <begin position="230"/>
        <end position="235"/>
    </location>
</feature>
<feature type="helix" evidence="40">
    <location>
        <begin position="236"/>
        <end position="249"/>
    </location>
</feature>
<feature type="strand" evidence="40">
    <location>
        <begin position="250"/>
        <end position="252"/>
    </location>
</feature>
<feature type="helix" evidence="40">
    <location>
        <begin position="255"/>
        <end position="259"/>
    </location>
</feature>
<feature type="strand" evidence="40">
    <location>
        <begin position="260"/>
        <end position="262"/>
    </location>
</feature>
<feature type="helix" evidence="40">
    <location>
        <begin position="263"/>
        <end position="273"/>
    </location>
</feature>
<feature type="helix" evidence="40">
    <location>
        <begin position="275"/>
        <end position="290"/>
    </location>
</feature>
<feature type="strand" evidence="37">
    <location>
        <begin position="296"/>
        <end position="298"/>
    </location>
</feature>
<feature type="helix" evidence="33">
    <location>
        <begin position="299"/>
        <end position="305"/>
    </location>
</feature>
<feature type="helix" evidence="33">
    <location>
        <begin position="309"/>
        <end position="322"/>
    </location>
</feature>
<feature type="strand" evidence="33">
    <location>
        <begin position="324"/>
        <end position="328"/>
    </location>
</feature>
<feature type="turn" evidence="33">
    <location>
        <begin position="333"/>
        <end position="335"/>
    </location>
</feature>
<feature type="helix" evidence="33">
    <location>
        <begin position="336"/>
        <end position="340"/>
    </location>
</feature>
<feature type="strand" evidence="42">
    <location>
        <begin position="348"/>
        <end position="350"/>
    </location>
</feature>
<feature type="strand" evidence="33">
    <location>
        <begin position="356"/>
        <end position="360"/>
    </location>
</feature>
<feature type="strand" evidence="44">
    <location>
        <begin position="361"/>
        <end position="363"/>
    </location>
</feature>
<feature type="strand" evidence="33">
    <location>
        <begin position="365"/>
        <end position="367"/>
    </location>
</feature>
<feature type="helix" evidence="33">
    <location>
        <begin position="368"/>
        <end position="370"/>
    </location>
</feature>
<feature type="turn" evidence="34">
    <location>
        <begin position="372"/>
        <end position="375"/>
    </location>
</feature>
<feature type="helix" evidence="33">
    <location>
        <begin position="377"/>
        <end position="393"/>
    </location>
</feature>
<feature type="turn" evidence="33">
    <location>
        <begin position="394"/>
        <end position="396"/>
    </location>
</feature>
<feature type="strand" evidence="33">
    <location>
        <begin position="397"/>
        <end position="402"/>
    </location>
</feature>
<feature type="helix" evidence="33">
    <location>
        <begin position="407"/>
        <end position="415"/>
    </location>
</feature>
<feature type="strand" evidence="33">
    <location>
        <begin position="424"/>
        <end position="427"/>
    </location>
</feature>
<feature type="strand" evidence="33">
    <location>
        <begin position="430"/>
        <end position="436"/>
    </location>
</feature>
<feature type="strand" evidence="33">
    <location>
        <begin position="440"/>
        <end position="450"/>
    </location>
</feature>
<feature type="strand" evidence="33">
    <location>
        <begin position="452"/>
        <end position="457"/>
    </location>
</feature>
<feature type="strand" evidence="42">
    <location>
        <begin position="464"/>
        <end position="466"/>
    </location>
</feature>
<feature type="strand" evidence="34">
    <location>
        <begin position="471"/>
        <end position="473"/>
    </location>
</feature>
<feature type="strand" evidence="33">
    <location>
        <begin position="475"/>
        <end position="489"/>
    </location>
</feature>
<feature type="strand" evidence="33">
    <location>
        <begin position="494"/>
        <end position="500"/>
    </location>
</feature>
<feature type="helix" evidence="33">
    <location>
        <begin position="501"/>
        <end position="507"/>
    </location>
</feature>
<feature type="helix" evidence="33">
    <location>
        <begin position="510"/>
        <end position="516"/>
    </location>
</feature>
<feature type="strand" evidence="33">
    <location>
        <begin position="517"/>
        <end position="521"/>
    </location>
</feature>
<feature type="helix" evidence="43">
    <location>
        <begin position="522"/>
        <end position="525"/>
    </location>
</feature>
<feature type="helix" evidence="33">
    <location>
        <begin position="527"/>
        <end position="535"/>
    </location>
</feature>
<feature type="turn" evidence="40">
    <location>
        <begin position="536"/>
        <end position="538"/>
    </location>
</feature>
<feature type="strand" evidence="35">
    <location>
        <begin position="541"/>
        <end position="543"/>
    </location>
</feature>
<feature type="strand" evidence="34">
    <location>
        <begin position="544"/>
        <end position="546"/>
    </location>
</feature>
<feature type="strand" evidence="35">
    <location>
        <begin position="547"/>
        <end position="549"/>
    </location>
</feature>
<feature type="helix" evidence="33">
    <location>
        <begin position="551"/>
        <end position="565"/>
    </location>
</feature>
<feature type="turn" evidence="33">
    <location>
        <begin position="566"/>
        <end position="568"/>
    </location>
</feature>
<feature type="strand" evidence="42">
    <location>
        <begin position="570"/>
        <end position="572"/>
    </location>
</feature>
<feature type="helix" evidence="34">
    <location>
        <begin position="580"/>
        <end position="582"/>
    </location>
</feature>
<feature type="strand" evidence="33">
    <location>
        <begin position="593"/>
        <end position="596"/>
    </location>
</feature>
<feature type="strand" evidence="38">
    <location>
        <begin position="598"/>
        <end position="600"/>
    </location>
</feature>
<feature type="strand" evidence="33">
    <location>
        <begin position="602"/>
        <end position="607"/>
    </location>
</feature>
<feature type="helix" evidence="33">
    <location>
        <begin position="608"/>
        <end position="618"/>
    </location>
</feature>
<feature type="helix" evidence="33">
    <location>
        <begin position="620"/>
        <end position="622"/>
    </location>
</feature>
<feature type="turn" evidence="34">
    <location>
        <begin position="630"/>
        <end position="633"/>
    </location>
</feature>
<feature type="strand" evidence="39">
    <location>
        <begin position="634"/>
        <end position="636"/>
    </location>
</feature>
<feature type="turn" evidence="34">
    <location>
        <begin position="637"/>
        <end position="639"/>
    </location>
</feature>
<feature type="turn" evidence="33">
    <location>
        <begin position="648"/>
        <end position="650"/>
    </location>
</feature>
<feature type="turn" evidence="34">
    <location>
        <begin position="652"/>
        <end position="655"/>
    </location>
</feature>
<feature type="helix" evidence="33">
    <location>
        <begin position="660"/>
        <end position="674"/>
    </location>
</feature>
<feature type="strand" evidence="34">
    <location>
        <begin position="679"/>
        <end position="681"/>
    </location>
</feature>
<feature type="strand" evidence="36">
    <location>
        <begin position="683"/>
        <end position="685"/>
    </location>
</feature>
<feature type="helix" evidence="33">
    <location>
        <begin position="687"/>
        <end position="706"/>
    </location>
</feature>
<feature type="helix" evidence="33">
    <location>
        <begin position="707"/>
        <end position="710"/>
    </location>
</feature>
<feature type="helix" evidence="33">
    <location>
        <begin position="714"/>
        <end position="737"/>
    </location>
</feature>
<feature type="helix" evidence="33">
    <location>
        <begin position="743"/>
        <end position="767"/>
    </location>
</feature>
<feature type="helix" evidence="33">
    <location>
        <begin position="771"/>
        <end position="777"/>
    </location>
</feature>
<feature type="strand" evidence="37">
    <location>
        <begin position="778"/>
        <end position="780"/>
    </location>
</feature>
<feature type="helix" evidence="33">
    <location>
        <begin position="786"/>
        <end position="798"/>
    </location>
</feature>
<reference key="1">
    <citation type="journal article" date="1988" name="Gene">
        <title>Structural homology between virulence-associated bacterial adenylate cyclases.</title>
        <authorList>
            <person name="Escuyer V."/>
            <person name="Duflot E."/>
            <person name="Sezer O."/>
            <person name="Danchin A."/>
            <person name="Mock M."/>
        </authorList>
    </citation>
    <scope>NUCLEOTIDE SEQUENCE [GENOMIC DNA]</scope>
</reference>
<reference key="2">
    <citation type="journal article" date="1988" name="Gene">
        <title>Nucleotide sequence of the Bacillus anthracis edema factor gene (cya): a calmodulin-dependent adenylate cyclase.</title>
        <authorList>
            <person name="Robertson D.L."/>
            <person name="Tippetts M.T."/>
            <person name="Leppla S.H."/>
        </authorList>
    </citation>
    <scope>NUCLEOTIDE SEQUENCE [GENOMIC DNA]</scope>
    <scope>SUBCELLULAR LOCATION</scope>
    <scope>PROTEIN SEQUENCE OF 34-48</scope>
</reference>
<reference key="3">
    <citation type="patent" date="1990-05-02" number="EP0366550">
        <title>Nucleotide sequences expressing adenylate cyclase from B.anthracis, proteins having the activity of this adenylate cyclase and biological uses.</title>
        <authorList>
            <person name="Escuyer V."/>
            <person name="Duflot E."/>
            <person name="Mock M."/>
            <person name="Danchin A."/>
        </authorList>
    </citation>
    <scope>NUCLEOTIDE SEQUENCE [GENOMIC DNA]</scope>
</reference>
<reference key="4">
    <citation type="journal article" date="1988" name="J. Bacteriol.">
        <title>Molecular cloning and expression of the Bacillus anthracis edema factor toxin gene: a calmodulin-dependent adenylate cyclase.</title>
        <authorList>
            <person name="Tippetts M.T."/>
            <person name="Robertson D.L."/>
        </authorList>
    </citation>
    <scope>NUCLEOTIDE SEQUENCE [GENOMIC DNA]</scope>
</reference>
<reference key="5">
    <citation type="journal article" date="1999" name="J. Bacteriol.">
        <title>Sequence and organization of pXO1, the large Bacillus anthracis plasmid harboring the anthrax toxin genes.</title>
        <authorList>
            <person name="Okinaka R.T."/>
            <person name="Cloud K."/>
            <person name="Hampton O."/>
            <person name="Hoffmaster A.R."/>
            <person name="Hill K.K."/>
            <person name="Keim P."/>
            <person name="Koehler T.M."/>
            <person name="Lamke G."/>
            <person name="Kumano S."/>
            <person name="Mahillon J."/>
            <person name="Manter D."/>
            <person name="Martinez Y."/>
            <person name="Ricke D."/>
            <person name="Svensson R."/>
            <person name="Jackson P.J."/>
        </authorList>
    </citation>
    <scope>NUCLEOTIDE SEQUENCE [LARGE SCALE GENOMIC DNA]</scope>
    <source>
        <strain>Sterne</strain>
    </source>
</reference>
<reference key="6">
    <citation type="journal article" date="2002" name="Science">
        <title>Comparative genome sequencing for discovery of novel polymorphisms in Bacillus anthracis.</title>
        <authorList>
            <person name="Read T.D."/>
            <person name="Salzberg S.L."/>
            <person name="Pop M."/>
            <person name="Shumway M.F."/>
            <person name="Umayam L."/>
            <person name="Jiang L."/>
            <person name="Holtzapple E."/>
            <person name="Busch J.D."/>
            <person name="Smith K.L."/>
            <person name="Schupp J.M."/>
            <person name="Solomon D."/>
            <person name="Keim P."/>
            <person name="Fraser C.M."/>
        </authorList>
    </citation>
    <scope>NUCLEOTIDE SEQUENCE [GENOMIC DNA]</scope>
    <source>
        <strain>Ames / isolate Florida / A2012</strain>
    </source>
</reference>
<reference key="7">
    <citation type="journal article" date="2009" name="J. Bacteriol.">
        <title>The complete genome sequence of Bacillus anthracis Ames 'Ancestor'.</title>
        <authorList>
            <person name="Ravel J."/>
            <person name="Jiang L."/>
            <person name="Stanley S.T."/>
            <person name="Wilson M.R."/>
            <person name="Decker R.S."/>
            <person name="Read T.D."/>
            <person name="Worsham P."/>
            <person name="Keim P.S."/>
            <person name="Salzberg S.L."/>
            <person name="Fraser-Liggett C.M."/>
            <person name="Rasko D.A."/>
        </authorList>
    </citation>
    <scope>NUCLEOTIDE SEQUENCE [LARGE SCALE GENOMIC DNA]</scope>
    <source>
        <strain>Ames ancestor</strain>
    </source>
</reference>
<reference key="8">
    <citation type="journal article" date="2002" name="J. Appl. Microbiol.">
        <title>Sequence analysis of the genes encoding for the major virulence factors of Bacillus anthracis vaccine strain 'Carbosap'.</title>
        <authorList>
            <person name="Adone R."/>
            <person name="Pasquali P."/>
            <person name="La Rosa G."/>
            <person name="Marianelli C."/>
            <person name="Muscillo M."/>
            <person name="Fasanella A."/>
            <person name="Francia M."/>
            <person name="Ciuchini F."/>
        </authorList>
    </citation>
    <scope>NUCLEOTIDE SEQUENCE [GENOMIC DNA] OF 1-783</scope>
    <source>
        <strain>Carbosap</strain>
        <strain>Ferrara</strain>
    </source>
</reference>
<reference key="9">
    <citation type="journal article" date="1982" name="Proc. Natl. Acad. Sci. U.S.A.">
        <title>Anthrax toxin edema factor: a bacterial adenylate cyclase that increases cyclic AMP concentrations of eukaryotic cells.</title>
        <authorList>
            <person name="Leppla S.H."/>
        </authorList>
    </citation>
    <scope>FUNCTION</scope>
    <scope>CATALYTIC ACTIVITY</scope>
</reference>
<reference key="10">
    <citation type="journal article" date="1992" name="J. Biol. Chem.">
        <title>Functional characterization of protease-treated Bacillus anthracis protective antigen.</title>
        <authorList>
            <person name="Novak J.M."/>
            <person name="Stein M.P."/>
            <person name="Little S.F."/>
            <person name="Leppla S.H."/>
            <person name="Friedlander A.M."/>
        </authorList>
    </citation>
    <scope>SUBCELLULAR LOCATION</scope>
</reference>
<reference key="11">
    <citation type="journal article" date="1993" name="Adv. Second Messenger Phosphoprotein Res.">
        <title>Phylogeny of adenylyl cyclases.</title>
        <authorList>
            <person name="Danchin A."/>
        </authorList>
    </citation>
    <scope>REVIEW</scope>
</reference>
<reference key="12">
    <citation type="journal article" date="1997" name="Biochemistry">
        <title>Structure and interaction of PA63 and EF (edema toxin) of Bacillus anthracis with lipid membrane.</title>
        <authorList>
            <person name="Wang X.-M."/>
            <person name="Wattiez R."/>
            <person name="Mock M."/>
            <person name="Falmagne P."/>
            <person name="Ruysschaert J.-M."/>
            <person name="Cabiaux V."/>
        </authorList>
    </citation>
    <scope>INTERACTION WITH PA</scope>
    <source>
        <strain>Sterne</strain>
    </source>
</reference>
<reference key="13">
    <citation type="journal article" date="2000" name="Cell. Microbiol.">
        <title>Translocation of Bacillus anthracis lethal and oedema factors across endosome membranes.</title>
        <authorList>
            <person name="Guidi-Rontani C."/>
            <person name="Weber-Levy M."/>
            <person name="Mock M."/>
            <person name="Cabiaux V."/>
        </authorList>
    </citation>
    <scope>SUBCELLULAR LOCATION</scope>
    <source>
        <strain>Sterne</strain>
    </source>
</reference>
<reference key="14">
    <citation type="journal article" date="1990" name="Biochemistry">
        <title>Characterization of ATP and calmodulin-binding properties of a truncated form of Bacillus anthracis adenylate cyclase.</title>
        <authorList>
            <person name="Labruyere E."/>
            <person name="Mock M."/>
            <person name="Ladant D."/>
            <person name="Michelson S."/>
            <person name="Gilles A.-M."/>
            <person name="Laoide B."/>
            <person name="Barzu O."/>
        </authorList>
    </citation>
    <scope>CHARACTERIZATION OF CALMODULIN-BINDING DOMAIN</scope>
    <scope>ACTIVITY REGULATION</scope>
</reference>
<reference key="15">
    <citation type="journal article" date="2001" name="Mol. Microbiol.">
        <title>Fate of germinated Bacillus anthracis spores in primary murine macrophages.</title>
        <authorList>
            <person name="Guidi-Rontani C."/>
            <person name="Levy M."/>
            <person name="Ohayon H."/>
            <person name="Mock M."/>
        </authorList>
    </citation>
    <scope>FUNCTION</scope>
    <source>
        <strain>Sterne</strain>
    </source>
</reference>
<reference key="16">
    <citation type="journal article" date="2003" name="J. Biol. Chem.">
        <title>Structure-based inhibitor discovery against adenylyl cyclase toxins from pathogenic bacteria that cause anthrax and whooping cough.</title>
        <authorList>
            <person name="Soelaiman S."/>
            <person name="Wei B.Q."/>
            <person name="Bergson P."/>
            <person name="Lee Y.-S."/>
            <person name="Shen Y."/>
            <person name="Mrksich M."/>
            <person name="Shoichet B.K."/>
            <person name="Tang W.-J."/>
        </authorList>
    </citation>
    <scope>ACTIVITY REGULATION</scope>
</reference>
<reference key="17">
    <citation type="journal article" date="1990" name="J. Biol. Chem.">
        <title>A-type ATP binding consensus sequences are critical for the catalytic activity of the calmodulin-sensitive adenylyl cyclase from Bacillus anthracis.</title>
        <authorList>
            <person name="Xia Z."/>
            <person name="Storm D.R."/>
        </authorList>
    </citation>
    <scope>FUNCTION</scope>
    <scope>CATALYTIC ACTIVITY</scope>
    <scope>MUTAGENESIS OF LYS-346; LYS-353 AND GLU-436</scope>
    <source>
        <strain>SRI-1</strain>
    </source>
</reference>
<reference key="18">
    <citation type="journal article" date="1991" name="Biochemistry">
        <title>Structural and ligand-binding properties of a truncated form of Bacillus anthracis adenylate cyclase and of a catalytically inactive variant in which glutamine substitutes for lysine-346.</title>
        <authorList>
            <person name="Labruyere E."/>
            <person name="Mock M."/>
            <person name="Surewicz W.K."/>
            <person name="Mantsch H.H."/>
            <person name="Rose T."/>
            <person name="Munier H."/>
            <person name="Sarfati R.S."/>
            <person name="Barzu O."/>
        </authorList>
    </citation>
    <scope>MUTAGENESIS OF LYS-346</scope>
    <source>
        <strain>Sterne</strain>
    </source>
</reference>
<reference key="19">
    <citation type="journal article" date="2001" name="Infect. Immun.">
        <title>Purification of anthrax edema factor from Escherichia coli and identification of residues required for binding to anthrax protective antigen.</title>
        <authorList>
            <person name="Kumar P."/>
            <person name="Ahuja N."/>
            <person name="Bhatnagar R."/>
        </authorList>
    </citation>
    <scope>FUNCTION</scope>
    <scope>INTERACTION WITH PA</scope>
    <scope>MUTAGENESIS OF VAL-169; TYR-170; TYR-171; GLU-172; ILE-173; GLY-174 AND LYS-175</scope>
</reference>
<reference key="20">
    <citation type="journal article" date="2000" name="J. Biol. Chem.">
        <title>An extended conformation of calmodulin induces interactions between the structural domains of adenylyl cyclase from Bacillus anthracis to promote catalysis.</title>
        <authorList>
            <person name="Drum C.L."/>
            <person name="Yan S.-Z."/>
            <person name="Sarac R."/>
            <person name="Mabuchi Y."/>
            <person name="Beckingham K."/>
            <person name="Bohm A."/>
            <person name="Grabarek Z."/>
            <person name="Tang W.-J."/>
        </authorList>
    </citation>
    <scope>MUTAGENESIS OF ARG-329; GLU-443; ASP-491 AND ASP-493</scope>
</reference>
<reference key="21">
    <citation type="journal article" date="2001" name="Annu. Rev. Microbiol.">
        <title>Anthrax.</title>
        <authorList>
            <person name="Mock M."/>
            <person name="Fouet A."/>
        </authorList>
    </citation>
    <scope>REVIEW</scope>
</reference>
<reference key="22">
    <citation type="journal article" date="2004" name="Biochem. Biophys. Res. Commun.">
        <title>Anthrax toxin complexes: heptameric protective antigen can bind lethal factor and edema factor simultaneously.</title>
        <authorList>
            <person name="Pimental R.A."/>
            <person name="Christensen K.A."/>
            <person name="Krantz B.A."/>
            <person name="Collier R.J."/>
        </authorList>
    </citation>
    <scope>INTERACTION WITH PA</scope>
</reference>
<reference key="23">
    <citation type="journal article" date="2002" name="Nature">
        <title>Structural basis for the activation of anthrax adenylyl cyclase exotoxin by calmodulin.</title>
        <authorList>
            <person name="Drum C.L."/>
            <person name="Yan S.-Z."/>
            <person name="Bard J."/>
            <person name="Shen Y.-Q."/>
            <person name="Lu D."/>
            <person name="Soelaiman S."/>
            <person name="Grabarek Z."/>
            <person name="Bohm A."/>
            <person name="Tang W.-J."/>
        </authorList>
    </citation>
    <scope>X-RAY CRYSTALLOGRAPHY (2.6 ANGSTROMS)</scope>
    <scope>FUNCTION</scope>
    <scope>CATALYTIC ACTIVITY</scope>
    <scope>ACTIVITY REGULATION</scope>
    <scope>DOMAIN</scope>
    <scope>ACTIVE SITE</scope>
    <scope>MUTAGENESIS OF LEU-523; LYS-525; GLN-526; VAL-529; HIS-577; ASN-583; GLU-588; ASP-590; ASN-639 AND ASP-647</scope>
</reference>
<reference evidence="22 23 24 25 26 27 28" key="24">
    <citation type="journal article" date="2005" name="EMBO J.">
        <title>Calcium-independent calmodulin binding and two-metal-ion catalytic mechanism of anthrax edema factor.</title>
        <authorList>
            <person name="Shen Y."/>
            <person name="Zhukovskaya N.L."/>
            <person name="Guo Q."/>
            <person name="Florian J."/>
            <person name="Tang W.-J."/>
        </authorList>
    </citation>
    <scope>X-RAY CRYSTALLOGRAPHY (3.20 ANGSTROMS) OF 31-800 IN COMPLEX WITH CALMODULIN; MAGNESIUM AND CAMP</scope>
</reference>
<reference evidence="29 30 31" key="25">
    <citation type="journal article" date="2020" name="Nat. Commun.">
        <title>Atomic structures of anthrax toxin protective antigen channels bound to partially unfolded lethal and edema factors.</title>
        <authorList>
            <person name="Hardenbrook N.J."/>
            <person name="Liu S."/>
            <person name="Zhou K."/>
            <person name="Ghosal K."/>
            <person name="Hong Zhou Z."/>
            <person name="Krantz B.A."/>
        </authorList>
    </citation>
    <scope>STRUCTURE BY ELECTRON MICROSCOPY (3.20 ANGSTROMS) OF 34-800 IN COMPLEX WITH PA</scope>
    <scope>INTERACTION WITH PA</scope>
    <scope>SUBCELLULAR LOCATION</scope>
</reference>
<reference evidence="32" key="26">
    <citation type="journal article" date="2020" name="Structure">
        <title>Atomic structures of anthrax prechannel bound with full-length Lethal and Edema factors.</title>
        <authorList>
            <person name="Zhou K."/>
            <person name="Liu S."/>
            <person name="Hardenbrook N.J."/>
            <person name="Cui Y."/>
            <person name="Krantz B.A."/>
            <person name="Zhou Z.H."/>
        </authorList>
    </citation>
    <scope>STRUCTURE BY ELECTRON MICROSCOPY (3.30 ANGSTROMS) OF 34-800 IN COMPLEX WITH PA</scope>
</reference>
<name>CYAA_BACAN</name>
<geneLocation type="plasmid">
    <name>pXO1</name>
</geneLocation>
<comment type="function">
    <text evidence="4 5 6 12 17">Edema factor (EF), which constitutes one of the three proteins composing the anthrax toxin, causes edema in the host (PubMed:11807546, PubMed:2108958, PubMed:6285339). Acts as a calmodulin-dependent adenylyl cyclase by converting ATP to cAMP, leading to dramatic elevation of intracellular cAMP levels in the host, thereby causing edema (PubMed:11807546, PubMed:2108958, PubMed:6285339). EF is not toxic by itself and only acts as an edema factor when associated with protective antigen (PA) to form the edema toxin (EdTx) (PubMed:11553601, PubMed:2108958). Required for the survival of germinated spores within macrophages at the early stages of infection (PubMed:11737637).</text>
</comment>
<comment type="catalytic activity">
    <reaction evidence="6 12 17">
        <text>ATP = 3',5'-cyclic AMP + diphosphate</text>
        <dbReference type="Rhea" id="RHEA:15389"/>
        <dbReference type="ChEBI" id="CHEBI:30616"/>
        <dbReference type="ChEBI" id="CHEBI:33019"/>
        <dbReference type="ChEBI" id="CHEBI:58165"/>
        <dbReference type="EC" id="4.6.1.1"/>
    </reaction>
</comment>
<comment type="cofactor">
    <cofactor>
        <name>Ca(2+)</name>
        <dbReference type="ChEBI" id="CHEBI:29108"/>
    </cofactor>
</comment>
<comment type="activity regulation">
    <text evidence="6 7 13">Host calmodulin is an absolute requirement for its activation (PubMed:11807546, PubMed:2114169). Inhibited by ethyl 5-aminopyrazolo[1,5-a]quinazoline-3-carboxylate (PubMed:12676933).</text>
</comment>
<comment type="subunit">
    <text evidence="4 9 15 18">Interacts (via ATLF domain) with the cleaved form of protective antigen (PA-63) anthrax toxin; interaction is required for EF translocation into the host cytoplasm.</text>
</comment>
<comment type="interaction">
    <interactant intactId="EBI-457011">
        <id>P40136</id>
    </interactant>
    <interactant intactId="EBI-397568">
        <id>P62155</id>
        <label>calm2</label>
    </interactant>
    <organismsDiffer>true</organismsDiffer>
    <experiments>2</experiments>
</comment>
<comment type="interaction">
    <interactant intactId="EBI-457011">
        <id>P40136</id>
    </interactant>
    <interactant intactId="EBI-397435">
        <id>P62158</id>
        <label>CALM3</label>
    </interactant>
    <organismsDiffer>true</organismsDiffer>
    <experiments>10</experiments>
</comment>
<comment type="subcellular location">
    <subcellularLocation>
        <location evidence="14">Secreted</location>
    </subcellularLocation>
    <subcellularLocation>
        <location evidence="8">Host cytoplasm</location>
        <location evidence="8">Host cytosol</location>
    </subcellularLocation>
    <text evidence="3 15 16">Translocation into host cytosol is mediated via interaction with the cleaved form of protective antigen (PA-63): following secretion, EF binds via its N-terminal region to the upper rim of the ring-shaped homooligomer (homoheptamer or homooctamer) formed by PA-63 on the host cell membrane (PubMed:32047164). In this PA-63 pre-pore state, the N-terminal segment of EF refolds into an alpha helix engaged in the alpha-clamp of the PA-63 pre-pore (PubMed:32047164, PubMed:32521227). Recruitment to the PA-63 pre-pore enables domain reorganization of EF (PubMed:32521227). Loaded complexes are then endocytosed, followed by a conformational change of oligomerized PA-63 from the pre-pore to pore state, which is triggered by the low pH in the endosome (PubMed:11207582). EF is then unfolded to pass through the PA-63 pore and translocate into the host cytosol (PubMed:32047164).</text>
</comment>
<comment type="domain">
    <text evidence="6">The N-terminal region contains the ATLF domain responsible for binding to the cleaved form of protective antigen (PA-63) (PubMed:11807546). The C-terminal region contains the calmodulin-dependent activation domain and the catalytic site (PubMed:11807546). This region is composed of three globular domains: CA, CB and a helical domain connected to CA by a linker (PubMed:11807546). The active site lies at the interface of CA and CB (PubMed:11807546). The metal ion is coordinated by residues from CA; calmodulin probably binds in a multistep fashion first to residues in CA and then to residues present in the linker and the helical domain (PubMed:11807546).</text>
</comment>
<comment type="similarity">
    <text evidence="21">Belongs to the adenylyl cyclase class-2 family.</text>
</comment>
<accession>P40136</accession>
<accession>Q937W4</accession>
<accession>Q937W5</accession>
<keyword id="KW-0002">3D-structure</keyword>
<keyword id="KW-0067">ATP-binding</keyword>
<keyword id="KW-0106">Calcium</keyword>
<keyword id="KW-0112">Calmodulin-binding</keyword>
<keyword id="KW-0115">cAMP biosynthesis</keyword>
<keyword id="KW-0903">Direct protein sequencing</keyword>
<keyword id="KW-1035">Host cytoplasm</keyword>
<keyword id="KW-0456">Lyase</keyword>
<keyword id="KW-0460">Magnesium</keyword>
<keyword id="KW-0479">Metal-binding</keyword>
<keyword id="KW-0547">Nucleotide-binding</keyword>
<keyword id="KW-0614">Plasmid</keyword>
<keyword id="KW-1185">Reference proteome</keyword>
<keyword id="KW-0964">Secreted</keyword>
<keyword id="KW-0732">Signal</keyword>
<keyword id="KW-0800">Toxin</keyword>
<keyword id="KW-0843">Virulence</keyword>
<protein>
    <recommendedName>
        <fullName evidence="19 20">Calmodulin-sensitive adenylate cyclase</fullName>
        <ecNumber evidence="6 12 17">4.6.1.1</ecNumber>
    </recommendedName>
    <alternativeName>
        <fullName>ATP pyrophosphate-lyase</fullName>
    </alternativeName>
    <alternativeName>
        <fullName>Adenylyl cyclase</fullName>
    </alternativeName>
    <alternativeName>
        <fullName>Anthrax edema toxin adenylate cyclase component</fullName>
    </alternativeName>
    <alternativeName>
        <fullName evidence="20">Edema factor</fullName>
        <shortName evidence="20">EF</shortName>
    </alternativeName>
</protein>
<sequence length="800" mass="92478">MTRNKFIPNKFSIISFSVLLFAISSSQAIEVNAMNEHYTESDIKRNHKTEKNKTEKEKFKDSINNLVKTEFTNETLDKIQQTQDLLKKIPKDVLEIYSELGGEIYFTDIDLVEHKELQDLSEEEKNSMNSRGEKVPFASRFVFEKKRETPKLIINIKDYAINSEQSKEVYYEIGKGISLDIISKDKSLDPEFLNLIKSLSDDSDSSDLLFSQKFKEKLELNNKSIDINFIKENLTEFQHAFSLAFSYYFAPDHRTVLELYAPDMFEYMNKLEKGGFEKISESLKKEGVEKDRIDVLKGEKALKASGLVPEHADAFKKIARELNTYILFRPVNKLATNLIKSGVATKGLNVHGKSSDWGPVAGYIPFDQDLSKKHGQQLAVEKGNLENKKSITEHEGEIGKIPLKLDHLRIEELKENGIILKGKKEIDNGKKYYLLESNNQVYEFRISDENNEVQYKTKEGKITVLGEKFNWRNIEVMAKNVEGVLKPLTADYDLFALAPSLTEIKKQIPQKEWDKVVNTPNSLEKQKGVTNLLIKYGIERKPDSTKGTLSNWQKQMLDRLNEAVKYTGYTGGDVVNHGTEQDNEEFPEKDNEIFIINPEGEFILTKNWEMTGRFIEKNITGKDYLYYFNRSYNKIAPGNKAYIEWTDPITKAKINTIPTSAEFIKNLSSIRRSSNVGVYKDSGDKDEFAKKESVKKIAGYLSDYYNSANHIFSQEKKRKISIFRGIQAYNEIENVLKSKQIAPEYKNYFQYLKERITNQVQLLLTHQKSNIEFKLLYKQLNFTENETDNFEVFQKIIDEK</sequence>
<evidence type="ECO:0000255" key="1">
    <source>
        <dbReference type="PROSITE-ProRule" id="PRU01339"/>
    </source>
</evidence>
<evidence type="ECO:0000269" key="2">
    <source>
    </source>
</evidence>
<evidence type="ECO:0000269" key="3">
    <source>
    </source>
</evidence>
<evidence type="ECO:0000269" key="4">
    <source>
    </source>
</evidence>
<evidence type="ECO:0000269" key="5">
    <source>
    </source>
</evidence>
<evidence type="ECO:0000269" key="6">
    <source>
    </source>
</evidence>
<evidence type="ECO:0000269" key="7">
    <source>
    </source>
</evidence>
<evidence type="ECO:0000269" key="8">
    <source>
    </source>
</evidence>
<evidence type="ECO:0000269" key="9">
    <source>
    </source>
</evidence>
<evidence type="ECO:0000269" key="10">
    <source>
    </source>
</evidence>
<evidence type="ECO:0000269" key="11">
    <source>
    </source>
</evidence>
<evidence type="ECO:0000269" key="12">
    <source>
    </source>
</evidence>
<evidence type="ECO:0000269" key="13">
    <source>
    </source>
</evidence>
<evidence type="ECO:0000269" key="14">
    <source>
    </source>
</evidence>
<evidence type="ECO:0000269" key="15">
    <source>
    </source>
</evidence>
<evidence type="ECO:0000269" key="16">
    <source>
    </source>
</evidence>
<evidence type="ECO:0000269" key="17">
    <source>
    </source>
</evidence>
<evidence type="ECO:0000269" key="18">
    <source>
    </source>
</evidence>
<evidence type="ECO:0000303" key="19">
    <source>
    </source>
</evidence>
<evidence type="ECO:0000303" key="20">
    <source>
    </source>
</evidence>
<evidence type="ECO:0000305" key="21"/>
<evidence type="ECO:0007744" key="22">
    <source>
        <dbReference type="PDB" id="1XFU"/>
    </source>
</evidence>
<evidence type="ECO:0007744" key="23">
    <source>
        <dbReference type="PDB" id="1XFV"/>
    </source>
</evidence>
<evidence type="ECO:0007744" key="24">
    <source>
        <dbReference type="PDB" id="1XFW"/>
    </source>
</evidence>
<evidence type="ECO:0007744" key="25">
    <source>
        <dbReference type="PDB" id="1XFX"/>
    </source>
</evidence>
<evidence type="ECO:0007744" key="26">
    <source>
        <dbReference type="PDB" id="1XFY"/>
    </source>
</evidence>
<evidence type="ECO:0007744" key="27">
    <source>
        <dbReference type="PDB" id="1XFZ"/>
    </source>
</evidence>
<evidence type="ECO:0007744" key="28">
    <source>
        <dbReference type="PDB" id="1Y0V"/>
    </source>
</evidence>
<evidence type="ECO:0007744" key="29">
    <source>
        <dbReference type="PDB" id="6UZB"/>
    </source>
</evidence>
<evidence type="ECO:0007744" key="30">
    <source>
        <dbReference type="PDB" id="6UZD"/>
    </source>
</evidence>
<evidence type="ECO:0007744" key="31">
    <source>
        <dbReference type="PDB" id="6UZE"/>
    </source>
</evidence>
<evidence type="ECO:0007744" key="32">
    <source>
        <dbReference type="PDB" id="6VRA"/>
    </source>
</evidence>
<evidence type="ECO:0007829" key="33">
    <source>
        <dbReference type="PDB" id="1K8T"/>
    </source>
</evidence>
<evidence type="ECO:0007829" key="34">
    <source>
        <dbReference type="PDB" id="1K90"/>
    </source>
</evidence>
<evidence type="ECO:0007829" key="35">
    <source>
        <dbReference type="PDB" id="1K93"/>
    </source>
</evidence>
<evidence type="ECO:0007829" key="36">
    <source>
        <dbReference type="PDB" id="1PK0"/>
    </source>
</evidence>
<evidence type="ECO:0007829" key="37">
    <source>
        <dbReference type="PDB" id="1SK6"/>
    </source>
</evidence>
<evidence type="ECO:0007829" key="38">
    <source>
        <dbReference type="PDB" id="1XFU"/>
    </source>
</evidence>
<evidence type="ECO:0007829" key="39">
    <source>
        <dbReference type="PDB" id="1XFV"/>
    </source>
</evidence>
<evidence type="ECO:0007829" key="40">
    <source>
        <dbReference type="PDB" id="1XFX"/>
    </source>
</evidence>
<evidence type="ECO:0007829" key="41">
    <source>
        <dbReference type="PDB" id="1XFY"/>
    </source>
</evidence>
<evidence type="ECO:0007829" key="42">
    <source>
        <dbReference type="PDB" id="6UZB"/>
    </source>
</evidence>
<evidence type="ECO:0007829" key="43">
    <source>
        <dbReference type="PDB" id="6UZD"/>
    </source>
</evidence>
<evidence type="ECO:0007829" key="44">
    <source>
        <dbReference type="PDB" id="6UZE"/>
    </source>
</evidence>
<evidence type="ECO:0007829" key="45">
    <source>
        <dbReference type="PDB" id="6VRA"/>
    </source>
</evidence>
<gene>
    <name type="primary">cya</name>
    <name type="ordered locus">pXO1-122</name>
    <name type="ordered locus">BXA0141</name>
    <name type="ordered locus">GBAA_pXO1_0142</name>
</gene>
<proteinExistence type="evidence at protein level"/>
<dbReference type="EC" id="4.6.1.1" evidence="6 12 17"/>
<dbReference type="EMBL" id="M23179">
    <property type="protein sequence ID" value="AAA22374.1"/>
    <property type="molecule type" value="Genomic_DNA"/>
</dbReference>
<dbReference type="EMBL" id="M24074">
    <property type="protein sequence ID" value="AAA79215.1"/>
    <property type="molecule type" value="Genomic_DNA"/>
</dbReference>
<dbReference type="EMBL" id="A07289">
    <property type="protein sequence ID" value="CAA00652.1"/>
    <property type="status" value="ALT_SEQ"/>
    <property type="molecule type" value="Genomic_DNA"/>
</dbReference>
<dbReference type="EMBL" id="AF065404">
    <property type="protein sequence ID" value="AAD32426.1"/>
    <property type="molecule type" value="Genomic_DNA"/>
</dbReference>
<dbReference type="EMBL" id="AE011190">
    <property type="protein sequence ID" value="AAM26089.1"/>
    <property type="molecule type" value="Genomic_DNA"/>
</dbReference>
<dbReference type="EMBL" id="AE017336">
    <property type="protein sequence ID" value="AAT28883.2"/>
    <property type="molecule type" value="Genomic_DNA"/>
</dbReference>
<dbReference type="EMBL" id="AJ413930">
    <property type="protein sequence ID" value="CAC93924.1"/>
    <property type="molecule type" value="Genomic_DNA"/>
</dbReference>
<dbReference type="EMBL" id="AJ413931">
    <property type="protein sequence ID" value="CAC93925.1"/>
    <property type="molecule type" value="Genomic_DNA"/>
</dbReference>
<dbReference type="PIR" id="B59106">
    <property type="entry name" value="B59106"/>
</dbReference>
<dbReference type="PIR" id="JS0029">
    <property type="entry name" value="JS0029"/>
</dbReference>
<dbReference type="RefSeq" id="NP_052818.1">
    <property type="nucleotide sequence ID" value="NC_001496.1"/>
</dbReference>
<dbReference type="RefSeq" id="WP_000197748.1">
    <property type="nucleotide sequence ID" value="NZ_VTZH01000015.1"/>
</dbReference>
<dbReference type="PDB" id="1K8T">
    <property type="method" value="X-ray"/>
    <property type="resolution" value="2.60 A"/>
    <property type="chains" value="A=291-800"/>
</dbReference>
<dbReference type="PDB" id="1K90">
    <property type="method" value="X-ray"/>
    <property type="resolution" value="2.75 A"/>
    <property type="chains" value="A/B/C=291-800"/>
</dbReference>
<dbReference type="PDB" id="1K93">
    <property type="method" value="X-ray"/>
    <property type="resolution" value="2.95 A"/>
    <property type="chains" value="A/B/C=291-800"/>
</dbReference>
<dbReference type="PDB" id="1LVC">
    <property type="method" value="X-ray"/>
    <property type="resolution" value="3.60 A"/>
    <property type="chains" value="A/B/C=291-800"/>
</dbReference>
<dbReference type="PDB" id="1PK0">
    <property type="method" value="X-ray"/>
    <property type="resolution" value="3.30 A"/>
    <property type="chains" value="A/B/C=292-798"/>
</dbReference>
<dbReference type="PDB" id="1S26">
    <property type="method" value="X-ray"/>
    <property type="resolution" value="3.00 A"/>
    <property type="chains" value="A/B/C=291-800"/>
</dbReference>
<dbReference type="PDB" id="1SK6">
    <property type="method" value="X-ray"/>
    <property type="resolution" value="3.20 A"/>
    <property type="chains" value="A/B/C=291-800"/>
</dbReference>
<dbReference type="PDB" id="1XFU">
    <property type="method" value="X-ray"/>
    <property type="resolution" value="3.35 A"/>
    <property type="chains" value="A/B/C/D/E/F=64-800"/>
</dbReference>
<dbReference type="PDB" id="1XFV">
    <property type="method" value="X-ray"/>
    <property type="resolution" value="3.35 A"/>
    <property type="chains" value="A/B/C/D/E/F=33-800"/>
</dbReference>
<dbReference type="PDB" id="1XFW">
    <property type="method" value="X-ray"/>
    <property type="resolution" value="3.40 A"/>
    <property type="chains" value="A/B/C/D/E/F=33-800"/>
</dbReference>
<dbReference type="PDB" id="1XFX">
    <property type="method" value="X-ray"/>
    <property type="resolution" value="3.20 A"/>
    <property type="chains" value="A/B/C/D/E/F=33-800"/>
</dbReference>
<dbReference type="PDB" id="1XFY">
    <property type="method" value="X-ray"/>
    <property type="resolution" value="3.30 A"/>
    <property type="chains" value="A/B/C/D/E/F=33-800"/>
</dbReference>
<dbReference type="PDB" id="1XFZ">
    <property type="method" value="X-ray"/>
    <property type="resolution" value="3.25 A"/>
    <property type="chains" value="A/B/C/D/E/F=33-800"/>
</dbReference>
<dbReference type="PDB" id="1Y0V">
    <property type="method" value="X-ray"/>
    <property type="resolution" value="3.60 A"/>
    <property type="chains" value="A/B/C/D/E/F=33-800"/>
</dbReference>
<dbReference type="PDB" id="6UZB">
    <property type="method" value="EM"/>
    <property type="resolution" value="3.20 A"/>
    <property type="chains" value="H=34-800"/>
</dbReference>
<dbReference type="PDB" id="6UZD">
    <property type="method" value="EM"/>
    <property type="resolution" value="3.40 A"/>
    <property type="chains" value="H/I=34-800"/>
</dbReference>
<dbReference type="PDB" id="6UZE">
    <property type="method" value="EM"/>
    <property type="resolution" value="3.40 A"/>
    <property type="chains" value="H/I=34-800"/>
</dbReference>
<dbReference type="PDB" id="6VRA">
    <property type="method" value="EM"/>
    <property type="resolution" value="3.30 A"/>
    <property type="chains" value="I/J/K/L=34-800"/>
</dbReference>
<dbReference type="PDBsum" id="1K8T"/>
<dbReference type="PDBsum" id="1K90"/>
<dbReference type="PDBsum" id="1K93"/>
<dbReference type="PDBsum" id="1LVC"/>
<dbReference type="PDBsum" id="1PK0"/>
<dbReference type="PDBsum" id="1S26"/>
<dbReference type="PDBsum" id="1SK6"/>
<dbReference type="PDBsum" id="1XFU"/>
<dbReference type="PDBsum" id="1XFV"/>
<dbReference type="PDBsum" id="1XFW"/>
<dbReference type="PDBsum" id="1XFX"/>
<dbReference type="PDBsum" id="1XFY"/>
<dbReference type="PDBsum" id="1XFZ"/>
<dbReference type="PDBsum" id="1Y0V"/>
<dbReference type="PDBsum" id="6UZB"/>
<dbReference type="PDBsum" id="6UZD"/>
<dbReference type="PDBsum" id="6UZE"/>
<dbReference type="PDBsum" id="6VRA"/>
<dbReference type="EMDB" id="EMD-20955"/>
<dbReference type="EMDB" id="EMD-20957"/>
<dbReference type="EMDB" id="EMD-20958"/>
<dbReference type="EMDB" id="EMD-21365"/>
<dbReference type="SMR" id="P40136"/>
<dbReference type="DIP" id="DIP-31055N"/>
<dbReference type="IntAct" id="P40136">
    <property type="interactions" value="3"/>
</dbReference>
<dbReference type="BindingDB" id="P40136"/>
<dbReference type="ChEMBL" id="CHEMBL5396"/>
<dbReference type="ABCD" id="P40136">
    <property type="antibodies" value="17 sequenced antibodies"/>
</dbReference>
<dbReference type="GeneID" id="45025501"/>
<dbReference type="KEGG" id="bar:GBAA_pXO1_0142"/>
<dbReference type="HOGENOM" id="CLU_346710_0_0_9"/>
<dbReference type="OMA" id="DKFEVFQ"/>
<dbReference type="Reactome" id="R-HSA-5210891">
    <property type="pathway name" value="Uptake and function of anthrax toxins"/>
</dbReference>
<dbReference type="EvolutionaryTrace" id="P40136"/>
<dbReference type="PHI-base" id="PHI:4091"/>
<dbReference type="PRO" id="PR:P40136"/>
<dbReference type="Proteomes" id="UP000000594">
    <property type="component" value="Plasmid pXO1"/>
</dbReference>
<dbReference type="GO" id="GO:1902494">
    <property type="term" value="C:catalytic complex"/>
    <property type="evidence" value="ECO:0000315"/>
    <property type="project" value="CAFA"/>
</dbReference>
<dbReference type="GO" id="GO:0005576">
    <property type="term" value="C:extracellular region"/>
    <property type="evidence" value="ECO:0007669"/>
    <property type="project" value="UniProtKB-SubCell"/>
</dbReference>
<dbReference type="GO" id="GO:0044164">
    <property type="term" value="C:host cell cytosol"/>
    <property type="evidence" value="ECO:0000314"/>
    <property type="project" value="UniProtKB"/>
</dbReference>
<dbReference type="GO" id="GO:0010856">
    <property type="term" value="F:adenylate cyclase activator activity"/>
    <property type="evidence" value="ECO:0000315"/>
    <property type="project" value="CAFA"/>
</dbReference>
<dbReference type="GO" id="GO:0004016">
    <property type="term" value="F:adenylate cyclase activity"/>
    <property type="evidence" value="ECO:0000269"/>
    <property type="project" value="Reactome"/>
</dbReference>
<dbReference type="GO" id="GO:0005524">
    <property type="term" value="F:ATP binding"/>
    <property type="evidence" value="ECO:0000315"/>
    <property type="project" value="CAFA"/>
</dbReference>
<dbReference type="GO" id="GO:0008294">
    <property type="term" value="F:calcium- and calmodulin-responsive adenylate cyclase activity"/>
    <property type="evidence" value="ECO:0000314"/>
    <property type="project" value="CACAO"/>
</dbReference>
<dbReference type="GO" id="GO:0005516">
    <property type="term" value="F:calmodulin binding"/>
    <property type="evidence" value="ECO:0000353"/>
    <property type="project" value="CAFA"/>
</dbReference>
<dbReference type="GO" id="GO:0046872">
    <property type="term" value="F:metal ion binding"/>
    <property type="evidence" value="ECO:0000315"/>
    <property type="project" value="CAFA"/>
</dbReference>
<dbReference type="GO" id="GO:0008237">
    <property type="term" value="F:metallopeptidase activity"/>
    <property type="evidence" value="ECO:0007669"/>
    <property type="project" value="InterPro"/>
</dbReference>
<dbReference type="GO" id="GO:0036094">
    <property type="term" value="F:small molecule binding"/>
    <property type="evidence" value="ECO:0000269"/>
    <property type="project" value="DisProt"/>
</dbReference>
<dbReference type="GO" id="GO:0090729">
    <property type="term" value="F:toxin activity"/>
    <property type="evidence" value="ECO:0007669"/>
    <property type="project" value="UniProtKB-KW"/>
</dbReference>
<dbReference type="GO" id="GO:0006171">
    <property type="term" value="P:cAMP biosynthetic process"/>
    <property type="evidence" value="ECO:0007669"/>
    <property type="project" value="UniProtKB-KW"/>
</dbReference>
<dbReference type="GO" id="GO:0141042">
    <property type="term" value="P:symbiont-mediated cAMP intoxication of host cell"/>
    <property type="evidence" value="ECO:0000269"/>
    <property type="project" value="SigSci"/>
</dbReference>
<dbReference type="GO" id="GO:0052027">
    <property type="term" value="P:symbiont-mediated perturbation of host signal transduction pathway"/>
    <property type="evidence" value="ECO:0000305"/>
    <property type="project" value="GO_Central"/>
</dbReference>
<dbReference type="CDD" id="cd20185">
    <property type="entry name" value="M34_PABD"/>
    <property type="match status" value="1"/>
</dbReference>
<dbReference type="DisProt" id="DP00395"/>
<dbReference type="Gene3D" id="1.20.140.60">
    <property type="match status" value="1"/>
</dbReference>
<dbReference type="Gene3D" id="3.30.70.1720">
    <property type="match status" value="1"/>
</dbReference>
<dbReference type="Gene3D" id="3.90.1760.10">
    <property type="entry name" value="Anthrax toxin, edema factor, central domain"/>
    <property type="match status" value="1"/>
</dbReference>
<dbReference type="Gene3D" id="3.40.390.10">
    <property type="entry name" value="Collagenase (Catalytic Domain)"/>
    <property type="match status" value="1"/>
</dbReference>
<dbReference type="InterPro" id="IPR035099">
    <property type="entry name" value="Anthrax_toxin_C-terminal"/>
</dbReference>
<dbReference type="InterPro" id="IPR005165">
    <property type="entry name" value="Anthrax_toxin_edema_cen"/>
</dbReference>
<dbReference type="InterPro" id="IPR037017">
    <property type="entry name" value="Anthrax_toxin_edema_cen_sf"/>
</dbReference>
<dbReference type="InterPro" id="IPR003541">
    <property type="entry name" value="Anthrax_toxin_lethal/edema"/>
</dbReference>
<dbReference type="InterPro" id="IPR014781">
    <property type="entry name" value="Anthrax_toxin_lethal/edema_N/C"/>
</dbReference>
<dbReference type="InterPro" id="IPR047568">
    <property type="entry name" value="ATLF-like_dom"/>
</dbReference>
<dbReference type="InterPro" id="IPR049405">
    <property type="entry name" value="EF_HD"/>
</dbReference>
<dbReference type="InterPro" id="IPR024079">
    <property type="entry name" value="MetalloPept_cat_dom_sf"/>
</dbReference>
<dbReference type="Pfam" id="PF03497">
    <property type="entry name" value="Anthrax_toxA"/>
    <property type="match status" value="1"/>
</dbReference>
<dbReference type="Pfam" id="PF07737">
    <property type="entry name" value="ATLF"/>
    <property type="match status" value="1"/>
</dbReference>
<dbReference type="Pfam" id="PF20850">
    <property type="entry name" value="EF_HD"/>
    <property type="match status" value="1"/>
</dbReference>
<dbReference type="PRINTS" id="PR01392">
    <property type="entry name" value="ANTHRAXTOXNA"/>
</dbReference>
<dbReference type="SUPFAM" id="SSF81298">
    <property type="entry name" value="Adenylylcyclase toxin (the edema factor)"/>
    <property type="match status" value="1"/>
</dbReference>
<dbReference type="SUPFAM" id="SSF55486">
    <property type="entry name" value="Metalloproteases ('zincins'), catalytic domain"/>
    <property type="match status" value="1"/>
</dbReference>
<dbReference type="PROSITE" id="PS51995">
    <property type="entry name" value="ATLF"/>
    <property type="match status" value="1"/>
</dbReference>